<reference key="1">
    <citation type="journal article" date="2004" name="J. Infect. Dis.">
        <title>Progress toward characterization of the group A Streptococcus metagenome: complete genome sequence of a macrolide-resistant serotype M6 strain.</title>
        <authorList>
            <person name="Banks D.J."/>
            <person name="Porcella S.F."/>
            <person name="Barbian K.D."/>
            <person name="Beres S.B."/>
            <person name="Philips L.E."/>
            <person name="Voyich J.M."/>
            <person name="DeLeo F.R."/>
            <person name="Martin J.M."/>
            <person name="Somerville G.A."/>
            <person name="Musser J.M."/>
        </authorList>
    </citation>
    <scope>NUCLEOTIDE SEQUENCE [LARGE SCALE GENOMIC DNA]</scope>
    <source>
        <strain>ATCC BAA-946 / MGAS10394</strain>
    </source>
</reference>
<name>CARA_STRP6</name>
<organism>
    <name type="scientific">Streptococcus pyogenes serotype M6 (strain ATCC BAA-946 / MGAS10394)</name>
    <dbReference type="NCBI Taxonomy" id="286636"/>
    <lineage>
        <taxon>Bacteria</taxon>
        <taxon>Bacillati</taxon>
        <taxon>Bacillota</taxon>
        <taxon>Bacilli</taxon>
        <taxon>Lactobacillales</taxon>
        <taxon>Streptococcaceae</taxon>
        <taxon>Streptococcus</taxon>
    </lineage>
</organism>
<dbReference type="EC" id="6.3.5.5" evidence="1"/>
<dbReference type="EMBL" id="CP000003">
    <property type="protein sequence ID" value="AAT86795.1"/>
    <property type="molecule type" value="Genomic_DNA"/>
</dbReference>
<dbReference type="RefSeq" id="WP_002985087.1">
    <property type="nucleotide sequence ID" value="NC_006086.1"/>
</dbReference>
<dbReference type="SMR" id="Q5XCR8"/>
<dbReference type="KEGG" id="spa:M6_Spy0660"/>
<dbReference type="HOGENOM" id="CLU_035901_2_1_9"/>
<dbReference type="UniPathway" id="UPA00068">
    <property type="reaction ID" value="UER00171"/>
</dbReference>
<dbReference type="UniPathway" id="UPA00070">
    <property type="reaction ID" value="UER00115"/>
</dbReference>
<dbReference type="Proteomes" id="UP000001167">
    <property type="component" value="Chromosome"/>
</dbReference>
<dbReference type="GO" id="GO:0005524">
    <property type="term" value="F:ATP binding"/>
    <property type="evidence" value="ECO:0007669"/>
    <property type="project" value="UniProtKB-UniRule"/>
</dbReference>
<dbReference type="GO" id="GO:0004088">
    <property type="term" value="F:carbamoyl-phosphate synthase (glutamine-hydrolyzing) activity"/>
    <property type="evidence" value="ECO:0007669"/>
    <property type="project" value="UniProtKB-UniRule"/>
</dbReference>
<dbReference type="GO" id="GO:0004359">
    <property type="term" value="F:glutaminase activity"/>
    <property type="evidence" value="ECO:0007669"/>
    <property type="project" value="RHEA"/>
</dbReference>
<dbReference type="GO" id="GO:0006207">
    <property type="term" value="P:'de novo' pyrimidine nucleobase biosynthetic process"/>
    <property type="evidence" value="ECO:0007669"/>
    <property type="project" value="InterPro"/>
</dbReference>
<dbReference type="GO" id="GO:0044205">
    <property type="term" value="P:'de novo' UMP biosynthetic process"/>
    <property type="evidence" value="ECO:0007669"/>
    <property type="project" value="UniProtKB-UniRule"/>
</dbReference>
<dbReference type="GO" id="GO:0006541">
    <property type="term" value="P:glutamine metabolic process"/>
    <property type="evidence" value="ECO:0007669"/>
    <property type="project" value="InterPro"/>
</dbReference>
<dbReference type="GO" id="GO:0006526">
    <property type="term" value="P:L-arginine biosynthetic process"/>
    <property type="evidence" value="ECO:0007669"/>
    <property type="project" value="UniProtKB-UniRule"/>
</dbReference>
<dbReference type="CDD" id="cd01744">
    <property type="entry name" value="GATase1_CPSase"/>
    <property type="match status" value="1"/>
</dbReference>
<dbReference type="FunFam" id="3.40.50.880:FF:000029">
    <property type="entry name" value="Carbamoyl-phosphate synthase small chain"/>
    <property type="match status" value="1"/>
</dbReference>
<dbReference type="FunFam" id="3.50.30.20:FF:000001">
    <property type="entry name" value="Carbamoyl-phosphate synthase small chain"/>
    <property type="match status" value="1"/>
</dbReference>
<dbReference type="Gene3D" id="3.40.50.880">
    <property type="match status" value="1"/>
</dbReference>
<dbReference type="Gene3D" id="3.50.30.20">
    <property type="entry name" value="Carbamoyl-phosphate synthase small subunit, N-terminal domain"/>
    <property type="match status" value="1"/>
</dbReference>
<dbReference type="HAMAP" id="MF_01209">
    <property type="entry name" value="CPSase_S_chain"/>
    <property type="match status" value="1"/>
</dbReference>
<dbReference type="InterPro" id="IPR050472">
    <property type="entry name" value="Anth_synth/Amidotransfase"/>
</dbReference>
<dbReference type="InterPro" id="IPR006274">
    <property type="entry name" value="CarbamoylP_synth_ssu"/>
</dbReference>
<dbReference type="InterPro" id="IPR002474">
    <property type="entry name" value="CarbamoylP_synth_ssu_N"/>
</dbReference>
<dbReference type="InterPro" id="IPR036480">
    <property type="entry name" value="CarbP_synth_ssu_N_sf"/>
</dbReference>
<dbReference type="InterPro" id="IPR029062">
    <property type="entry name" value="Class_I_gatase-like"/>
</dbReference>
<dbReference type="InterPro" id="IPR035686">
    <property type="entry name" value="CPSase_GATase1"/>
</dbReference>
<dbReference type="InterPro" id="IPR017926">
    <property type="entry name" value="GATASE"/>
</dbReference>
<dbReference type="NCBIfam" id="TIGR01368">
    <property type="entry name" value="CPSaseIIsmall"/>
    <property type="match status" value="1"/>
</dbReference>
<dbReference type="NCBIfam" id="NF009475">
    <property type="entry name" value="PRK12838.1"/>
    <property type="match status" value="1"/>
</dbReference>
<dbReference type="PANTHER" id="PTHR43418:SF7">
    <property type="entry name" value="CARBAMOYL-PHOSPHATE SYNTHASE SMALL CHAIN"/>
    <property type="match status" value="1"/>
</dbReference>
<dbReference type="PANTHER" id="PTHR43418">
    <property type="entry name" value="MULTIFUNCTIONAL TRYPTOPHAN BIOSYNTHESIS PROTEIN-RELATED"/>
    <property type="match status" value="1"/>
</dbReference>
<dbReference type="Pfam" id="PF00988">
    <property type="entry name" value="CPSase_sm_chain"/>
    <property type="match status" value="1"/>
</dbReference>
<dbReference type="Pfam" id="PF00117">
    <property type="entry name" value="GATase"/>
    <property type="match status" value="1"/>
</dbReference>
<dbReference type="PRINTS" id="PR00097">
    <property type="entry name" value="ANTSNTHASEII"/>
</dbReference>
<dbReference type="PRINTS" id="PR00099">
    <property type="entry name" value="CPSGATASE"/>
</dbReference>
<dbReference type="PRINTS" id="PR00096">
    <property type="entry name" value="GATASE"/>
</dbReference>
<dbReference type="SMART" id="SM01097">
    <property type="entry name" value="CPSase_sm_chain"/>
    <property type="match status" value="1"/>
</dbReference>
<dbReference type="SUPFAM" id="SSF52021">
    <property type="entry name" value="Carbamoyl phosphate synthetase, small subunit N-terminal domain"/>
    <property type="match status" value="1"/>
</dbReference>
<dbReference type="SUPFAM" id="SSF52317">
    <property type="entry name" value="Class I glutamine amidotransferase-like"/>
    <property type="match status" value="1"/>
</dbReference>
<dbReference type="PROSITE" id="PS51273">
    <property type="entry name" value="GATASE_TYPE_1"/>
    <property type="match status" value="1"/>
</dbReference>
<proteinExistence type="inferred from homology"/>
<gene>
    <name evidence="1" type="primary">carA</name>
    <name type="ordered locus">M6_Spy0660</name>
</gene>
<accession>Q5XCR8</accession>
<sequence length="360" mass="39757">MTKRLLILEDGTIFEGEPFGADIDVTGEIVFNTGMTGYQESITDQSYNGQILTFTYPLIGNYGINRDDYESISPTCKGVVVSEVSRLASNWRKQMTLDAFLKIKGIPGISGIDTRALTKIIRQHGTMKATMADDGDSIQHLKDQLRATVLPTNTIEQVSTKTAYPAPGIGKNIVLVDFGLKHSILREFSKRQCNITVVPFNITAEEVLQLNPDGLMLSNGPGNPEDLPEALDMIRGVQGKIPIFGICMGHQLFSLANGAKTCKMTFGHRGFNHAVREIATGRIDFTSQNHGYAVERSSLPDTLMVTHEDINDKTVEGVKHRDFPAFSVQFHPDAAPGPHDASYLFDEFLEMIDSWRCTSK</sequence>
<evidence type="ECO:0000255" key="1">
    <source>
        <dbReference type="HAMAP-Rule" id="MF_01209"/>
    </source>
</evidence>
<protein>
    <recommendedName>
        <fullName evidence="1">Carbamoyl phosphate synthase small chain</fullName>
        <ecNumber evidence="1">6.3.5.5</ecNumber>
    </recommendedName>
    <alternativeName>
        <fullName evidence="1">Carbamoyl phosphate synthetase glutamine chain</fullName>
    </alternativeName>
</protein>
<feature type="chain" id="PRO_0000112334" description="Carbamoyl phosphate synthase small chain">
    <location>
        <begin position="1"/>
        <end position="360"/>
    </location>
</feature>
<feature type="domain" description="Glutamine amidotransferase type-1" evidence="1">
    <location>
        <begin position="172"/>
        <end position="358"/>
    </location>
</feature>
<feature type="region of interest" description="CPSase" evidence="1">
    <location>
        <begin position="1"/>
        <end position="169"/>
    </location>
</feature>
<feature type="active site" description="Nucleophile" evidence="1">
    <location>
        <position position="247"/>
    </location>
</feature>
<feature type="active site" evidence="1">
    <location>
        <position position="331"/>
    </location>
</feature>
<feature type="active site" evidence="1">
    <location>
        <position position="333"/>
    </location>
</feature>
<feature type="binding site" evidence="1">
    <location>
        <position position="46"/>
    </location>
    <ligand>
        <name>L-glutamine</name>
        <dbReference type="ChEBI" id="CHEBI:58359"/>
    </ligand>
</feature>
<feature type="binding site" evidence="1">
    <location>
        <position position="220"/>
    </location>
    <ligand>
        <name>L-glutamine</name>
        <dbReference type="ChEBI" id="CHEBI:58359"/>
    </ligand>
</feature>
<feature type="binding site" evidence="1">
    <location>
        <position position="222"/>
    </location>
    <ligand>
        <name>L-glutamine</name>
        <dbReference type="ChEBI" id="CHEBI:58359"/>
    </ligand>
</feature>
<feature type="binding site" evidence="1">
    <location>
        <position position="248"/>
    </location>
    <ligand>
        <name>L-glutamine</name>
        <dbReference type="ChEBI" id="CHEBI:58359"/>
    </ligand>
</feature>
<feature type="binding site" evidence="1">
    <location>
        <position position="251"/>
    </location>
    <ligand>
        <name>L-glutamine</name>
        <dbReference type="ChEBI" id="CHEBI:58359"/>
    </ligand>
</feature>
<feature type="binding site" evidence="1">
    <location>
        <position position="289"/>
    </location>
    <ligand>
        <name>L-glutamine</name>
        <dbReference type="ChEBI" id="CHEBI:58359"/>
    </ligand>
</feature>
<feature type="binding site" evidence="1">
    <location>
        <position position="291"/>
    </location>
    <ligand>
        <name>L-glutamine</name>
        <dbReference type="ChEBI" id="CHEBI:58359"/>
    </ligand>
</feature>
<feature type="binding site" evidence="1">
    <location>
        <position position="292"/>
    </location>
    <ligand>
        <name>L-glutamine</name>
        <dbReference type="ChEBI" id="CHEBI:58359"/>
    </ligand>
</feature>
<keyword id="KW-0028">Amino-acid biosynthesis</keyword>
<keyword id="KW-0055">Arginine biosynthesis</keyword>
<keyword id="KW-0067">ATP-binding</keyword>
<keyword id="KW-0315">Glutamine amidotransferase</keyword>
<keyword id="KW-0436">Ligase</keyword>
<keyword id="KW-0547">Nucleotide-binding</keyword>
<keyword id="KW-0665">Pyrimidine biosynthesis</keyword>
<comment type="function">
    <text evidence="1">Small subunit of the glutamine-dependent carbamoyl phosphate synthetase (CPSase). CPSase catalyzes the formation of carbamoyl phosphate from the ammonia moiety of glutamine, carbonate, and phosphate donated by ATP, constituting the first step of 2 biosynthetic pathways, one leading to arginine and/or urea and the other to pyrimidine nucleotides. The small subunit (glutamine amidotransferase) binds and cleaves glutamine to supply the large subunit with the substrate ammonia.</text>
</comment>
<comment type="catalytic activity">
    <reaction evidence="1">
        <text>hydrogencarbonate + L-glutamine + 2 ATP + H2O = carbamoyl phosphate + L-glutamate + 2 ADP + phosphate + 2 H(+)</text>
        <dbReference type="Rhea" id="RHEA:18633"/>
        <dbReference type="ChEBI" id="CHEBI:15377"/>
        <dbReference type="ChEBI" id="CHEBI:15378"/>
        <dbReference type="ChEBI" id="CHEBI:17544"/>
        <dbReference type="ChEBI" id="CHEBI:29985"/>
        <dbReference type="ChEBI" id="CHEBI:30616"/>
        <dbReference type="ChEBI" id="CHEBI:43474"/>
        <dbReference type="ChEBI" id="CHEBI:58228"/>
        <dbReference type="ChEBI" id="CHEBI:58359"/>
        <dbReference type="ChEBI" id="CHEBI:456216"/>
        <dbReference type="EC" id="6.3.5.5"/>
    </reaction>
</comment>
<comment type="catalytic activity">
    <molecule>Carbamoyl phosphate synthase small chain</molecule>
    <reaction evidence="1">
        <text>L-glutamine + H2O = L-glutamate + NH4(+)</text>
        <dbReference type="Rhea" id="RHEA:15889"/>
        <dbReference type="ChEBI" id="CHEBI:15377"/>
        <dbReference type="ChEBI" id="CHEBI:28938"/>
        <dbReference type="ChEBI" id="CHEBI:29985"/>
        <dbReference type="ChEBI" id="CHEBI:58359"/>
    </reaction>
</comment>
<comment type="pathway">
    <text evidence="1">Amino-acid biosynthesis; L-arginine biosynthesis; carbamoyl phosphate from bicarbonate: step 1/1.</text>
</comment>
<comment type="pathway">
    <text evidence="1">Pyrimidine metabolism; UMP biosynthesis via de novo pathway; (S)-dihydroorotate from bicarbonate: step 1/3.</text>
</comment>
<comment type="subunit">
    <text evidence="1">Composed of two chains; the small (or glutamine) chain promotes the hydrolysis of glutamine to ammonia, which is used by the large (or ammonia) chain to synthesize carbamoyl phosphate. Tetramer of heterodimers (alpha,beta)4.</text>
</comment>
<comment type="similarity">
    <text evidence="1">Belongs to the CarA family.</text>
</comment>